<keyword id="KW-0175">Coiled coil</keyword>
<keyword id="KW-0964">Secreted</keyword>
<keyword id="KW-0843">Virulence</keyword>
<sequence length="310" mass="33975">MNMHVDMGRALTVRDWPALEALAKTMPADAGARAMTDDDLRAAGVDRRVPEQKLGAAIDEFASLRLPDRIDGRFVDGRRANLTVFDDARVAVRGHARAQRNLLERLETELLGGTLDTAGDEGGIQPDPILQGLVDVIGQGKSDIDAYATIVEGLTKYFQSVADVMSKLQDYISAKDDKNMKIDGGKIKALIQQVIDHLPTMQLPKGADIARWRKELGDAVSISDSGVVTINPDKLIKMRDSLPPDGTVWDTARYQAWNTAFSGQKDNIQNDVQTLVEKYSHQNSNFDNLVKVLSGAISTLTDTAKSYLQI</sequence>
<comment type="function">
    <text evidence="1">Required for invasion of epithelial cells, as well as for survival within host cells, escape from endocytic vesicles and subsequent actin-tail formation. Probably regulates the secretion of effectors BipB and BipC and their final integration into the target cell membrane (By similarity).</text>
</comment>
<comment type="subcellular location">
    <subcellularLocation>
        <location evidence="1">Secreted</location>
    </subcellularLocation>
    <text evidence="1">Secreted via the bsa type III secretion system. Localizes to the tip of the external secretion needle that is part of the secretion apparatus (By similarity).</text>
</comment>
<comment type="domain">
    <text evidence="1">The N-terminal domain is an intra-molecular chaperone that prevents premature oligomerization of the residues on the coiled-coil region that are involved in interactions with the needle and/or itself. The residues in the C-terminal domain probably form oligomeric structures at the tip of the needle that are responsible for the regulation of secretion of other effectors (By similarity).</text>
</comment>
<comment type="similarity">
    <text evidence="3">Belongs to the invasin protein D family.</text>
</comment>
<comment type="sequence caution" evidence="3">
    <conflict type="erroneous initiation">
        <sequence resource="EMBL-CDS" id="ABA51873"/>
    </conflict>
</comment>
<feature type="chain" id="PRO_0000344007" description="Translocator protein BipD">
    <location>
        <begin position="1"/>
        <end position="310"/>
    </location>
</feature>
<feature type="coiled-coil region" evidence="2">
    <location>
        <begin position="127"/>
        <end position="171"/>
    </location>
</feature>
<feature type="coiled-coil region" evidence="2">
    <location>
        <begin position="250"/>
        <end position="299"/>
    </location>
</feature>
<protein>
    <recommendedName>
        <fullName>Translocator protein BipD</fullName>
    </recommendedName>
</protein>
<dbReference type="EMBL" id="CP000125">
    <property type="protein sequence ID" value="ABA51873.1"/>
    <property type="status" value="ALT_INIT"/>
    <property type="molecule type" value="Genomic_DNA"/>
</dbReference>
<dbReference type="RefSeq" id="WP_004188590.1">
    <property type="nucleotide sequence ID" value="NC_007435.1"/>
</dbReference>
<dbReference type="SMR" id="Q3JL26"/>
<dbReference type="TCDB" id="1.C.36.3.3">
    <property type="family name" value="the bacterial type iii-target cell pore (iiitcp) family"/>
</dbReference>
<dbReference type="EnsemblBacteria" id="ABA51873">
    <property type="protein sequence ID" value="ABA51873"/>
    <property type="gene ID" value="BURPS1710b_A0568"/>
</dbReference>
<dbReference type="GeneID" id="93063709"/>
<dbReference type="KEGG" id="bpm:BURPS1710b_A0568"/>
<dbReference type="HOGENOM" id="CLU_893331_0_0_4"/>
<dbReference type="Proteomes" id="UP000002700">
    <property type="component" value="Chromosome II"/>
</dbReference>
<dbReference type="GO" id="GO:0005576">
    <property type="term" value="C:extracellular region"/>
    <property type="evidence" value="ECO:0007669"/>
    <property type="project" value="UniProtKB-SubCell"/>
</dbReference>
<dbReference type="Gene3D" id="1.20.1710.10">
    <property type="entry name" value="IpaD-like"/>
    <property type="match status" value="1"/>
</dbReference>
<dbReference type="InterPro" id="IPR036708">
    <property type="entry name" value="BipD-like_sf"/>
</dbReference>
<dbReference type="InterPro" id="IPR009483">
    <property type="entry name" value="IpaD/BipD/SipD"/>
</dbReference>
<dbReference type="NCBIfam" id="TIGR02553">
    <property type="entry name" value="SipD_IpaD_SspD"/>
    <property type="match status" value="1"/>
</dbReference>
<dbReference type="Pfam" id="PF06511">
    <property type="entry name" value="T3SS_TC"/>
    <property type="match status" value="1"/>
</dbReference>
<dbReference type="SUPFAM" id="SSF140693">
    <property type="entry name" value="IpaD-like"/>
    <property type="match status" value="1"/>
</dbReference>
<organism>
    <name type="scientific">Burkholderia pseudomallei (strain 1710b)</name>
    <dbReference type="NCBI Taxonomy" id="320372"/>
    <lineage>
        <taxon>Bacteria</taxon>
        <taxon>Pseudomonadati</taxon>
        <taxon>Pseudomonadota</taxon>
        <taxon>Betaproteobacteria</taxon>
        <taxon>Burkholderiales</taxon>
        <taxon>Burkholderiaceae</taxon>
        <taxon>Burkholderia</taxon>
        <taxon>pseudomallei group</taxon>
    </lineage>
</organism>
<reference key="1">
    <citation type="journal article" date="2010" name="Genome Biol. Evol.">
        <title>Continuing evolution of Burkholderia mallei through genome reduction and large-scale rearrangements.</title>
        <authorList>
            <person name="Losada L."/>
            <person name="Ronning C.M."/>
            <person name="DeShazer D."/>
            <person name="Woods D."/>
            <person name="Fedorova N."/>
            <person name="Kim H.S."/>
            <person name="Shabalina S.A."/>
            <person name="Pearson T.R."/>
            <person name="Brinkac L."/>
            <person name="Tan P."/>
            <person name="Nandi T."/>
            <person name="Crabtree J."/>
            <person name="Badger J."/>
            <person name="Beckstrom-Sternberg S."/>
            <person name="Saqib M."/>
            <person name="Schutzer S.E."/>
            <person name="Keim P."/>
            <person name="Nierman W.C."/>
        </authorList>
    </citation>
    <scope>NUCLEOTIDE SEQUENCE [LARGE SCALE GENOMIC DNA]</scope>
    <source>
        <strain>1710b</strain>
    </source>
</reference>
<accession>Q3JL26</accession>
<proteinExistence type="inferred from homology"/>
<name>BIPD_BURP1</name>
<gene>
    <name type="primary">bipD</name>
    <name type="ordered locus">BURPS1710b_A0568</name>
</gene>
<evidence type="ECO:0000250" key="1"/>
<evidence type="ECO:0000255" key="2"/>
<evidence type="ECO:0000305" key="3"/>